<sequence length="53" mass="5826">KKGVTLREDDRTFPCSSGLCACLPLDSYSYICLSPSSSTANCENDECISEDDW</sequence>
<comment type="function">
    <text evidence="3">Probable neurotoxin with unknown target. Possibly targets ion channels.</text>
</comment>
<comment type="subcellular location">
    <subcellularLocation>
        <location evidence="4">Secreted</location>
    </subcellularLocation>
</comment>
<comment type="tissue specificity">
    <text evidence="4">Expressed by the venom duct.</text>
</comment>
<comment type="domain">
    <text>The cysteine framework is IX (C-C-C-C-C-C).</text>
</comment>
<reference key="1">
    <citation type="journal article" date="2011" name="Toxicon">
        <title>Diversity of conotoxin types from Conus californicus reflects a diversity of prey types and a novel evolutionary history.</title>
        <authorList>
            <person name="Elliger C.A."/>
            <person name="Richmond T.A."/>
            <person name="Lebaric Z.N."/>
            <person name="Pierce N.T."/>
            <person name="Sweedler J.V."/>
            <person name="Gilly W.F."/>
        </authorList>
    </citation>
    <scope>NUCLEOTIDE SEQUENCE [MRNA]</scope>
    <source>
        <tissue>Venom duct</tissue>
    </source>
</reference>
<keyword id="KW-1015">Disulfide bond</keyword>
<keyword id="KW-0872">Ion channel impairing toxin</keyword>
<keyword id="KW-0528">Neurotoxin</keyword>
<keyword id="KW-0964">Secreted</keyword>
<keyword id="KW-0800">Toxin</keyword>
<accession>D2Y3T8</accession>
<protein>
    <recommendedName>
        <fullName evidence="2">Conotoxin Cal9.2f</fullName>
    </recommendedName>
</protein>
<proteinExistence type="evidence at transcript level"/>
<organism>
    <name type="scientific">Californiconus californicus</name>
    <name type="common">California cone</name>
    <name type="synonym">Conus californicus</name>
    <dbReference type="NCBI Taxonomy" id="1736779"/>
    <lineage>
        <taxon>Eukaryota</taxon>
        <taxon>Metazoa</taxon>
        <taxon>Spiralia</taxon>
        <taxon>Lophotrochozoa</taxon>
        <taxon>Mollusca</taxon>
        <taxon>Gastropoda</taxon>
        <taxon>Caenogastropoda</taxon>
        <taxon>Neogastropoda</taxon>
        <taxon>Conoidea</taxon>
        <taxon>Conidae</taxon>
        <taxon>Californiconus</taxon>
    </lineage>
</organism>
<evidence type="ECO:0000250" key="1"/>
<evidence type="ECO:0000303" key="2">
    <source>
    </source>
</evidence>
<evidence type="ECO:0000305" key="3"/>
<evidence type="ECO:0000305" key="4">
    <source>
    </source>
</evidence>
<dbReference type="EMBL" id="GU299520">
    <property type="protein sequence ID" value="ADB65795.1"/>
    <property type="molecule type" value="mRNA"/>
</dbReference>
<dbReference type="ConoServer" id="3995">
    <property type="toxin name" value="Cal9.2f precursor"/>
</dbReference>
<dbReference type="GO" id="GO:0005576">
    <property type="term" value="C:extracellular region"/>
    <property type="evidence" value="ECO:0007669"/>
    <property type="project" value="UniProtKB-SubCell"/>
</dbReference>
<dbReference type="GO" id="GO:0099106">
    <property type="term" value="F:ion channel regulator activity"/>
    <property type="evidence" value="ECO:0007669"/>
    <property type="project" value="UniProtKB-KW"/>
</dbReference>
<dbReference type="GO" id="GO:0090729">
    <property type="term" value="F:toxin activity"/>
    <property type="evidence" value="ECO:0007669"/>
    <property type="project" value="UniProtKB-KW"/>
</dbReference>
<feature type="propeptide" id="PRO_0000414951" evidence="4">
    <location>
        <begin position="1" status="less than"/>
        <end position="6"/>
    </location>
</feature>
<feature type="peptide" id="PRO_5000570808" description="Conotoxin Cal9.2f" evidence="4">
    <location>
        <begin position="8"/>
        <end position="53"/>
    </location>
</feature>
<feature type="disulfide bond" evidence="1">
    <location>
        <begin position="15"/>
        <end position="32"/>
    </location>
</feature>
<feature type="disulfide bond" evidence="1">
    <location>
        <begin position="20"/>
        <end position="42"/>
    </location>
</feature>
<feature type="disulfide bond" evidence="1">
    <location>
        <begin position="22"/>
        <end position="47"/>
    </location>
</feature>
<feature type="non-terminal residue">
    <location>
        <position position="1"/>
    </location>
</feature>
<name>CU92F_CONCL</name>